<reference key="1">
    <citation type="journal article" date="1997" name="J. Bacteriol.">
        <title>Complete genome sequence of Methanobacterium thermoautotrophicum deltaH: functional analysis and comparative genomics.</title>
        <authorList>
            <person name="Smith D.R."/>
            <person name="Doucette-Stamm L.A."/>
            <person name="Deloughery C."/>
            <person name="Lee H.-M."/>
            <person name="Dubois J."/>
            <person name="Aldredge T."/>
            <person name="Bashirzadeh R."/>
            <person name="Blakely D."/>
            <person name="Cook R."/>
            <person name="Gilbert K."/>
            <person name="Harrison D."/>
            <person name="Hoang L."/>
            <person name="Keagle P."/>
            <person name="Lumm W."/>
            <person name="Pothier B."/>
            <person name="Qiu D."/>
            <person name="Spadafora R."/>
            <person name="Vicare R."/>
            <person name="Wang Y."/>
            <person name="Wierzbowski J."/>
            <person name="Gibson R."/>
            <person name="Jiwani N."/>
            <person name="Caruso A."/>
            <person name="Bush D."/>
            <person name="Safer H."/>
            <person name="Patwell D."/>
            <person name="Prabhakar S."/>
            <person name="McDougall S."/>
            <person name="Shimer G."/>
            <person name="Goyal A."/>
            <person name="Pietrovski S."/>
            <person name="Church G.M."/>
            <person name="Daniels C.J."/>
            <person name="Mao J.-I."/>
            <person name="Rice P."/>
            <person name="Noelling J."/>
            <person name="Reeve J.N."/>
        </authorList>
    </citation>
    <scope>NUCLEOTIDE SEQUENCE [LARGE SCALE GENOMIC DNA]</scope>
    <source>
        <strain>ATCC 29096 / DSM 1053 / JCM 10044 / NBRC 100330 / Delta H</strain>
    </source>
</reference>
<accession>O26344</accession>
<feature type="chain" id="PRO_0000136063" description="Shikimate dehydrogenase (NADP(+))">
    <location>
        <begin position="1"/>
        <end position="283"/>
    </location>
</feature>
<feature type="active site" description="Proton acceptor" evidence="1">
    <location>
        <position position="70"/>
    </location>
</feature>
<feature type="binding site" evidence="1">
    <location>
        <begin position="19"/>
        <end position="21"/>
    </location>
    <ligand>
        <name>shikimate</name>
        <dbReference type="ChEBI" id="CHEBI:36208"/>
    </ligand>
</feature>
<feature type="binding site" evidence="1">
    <location>
        <position position="66"/>
    </location>
    <ligand>
        <name>shikimate</name>
        <dbReference type="ChEBI" id="CHEBI:36208"/>
    </ligand>
</feature>
<feature type="binding site" evidence="1">
    <location>
        <position position="91"/>
    </location>
    <ligand>
        <name>shikimate</name>
        <dbReference type="ChEBI" id="CHEBI:36208"/>
    </ligand>
</feature>
<feature type="binding site" evidence="1">
    <location>
        <position position="106"/>
    </location>
    <ligand>
        <name>shikimate</name>
        <dbReference type="ChEBI" id="CHEBI:36208"/>
    </ligand>
</feature>
<feature type="binding site" evidence="1">
    <location>
        <begin position="129"/>
        <end position="133"/>
    </location>
    <ligand>
        <name>NADP(+)</name>
        <dbReference type="ChEBI" id="CHEBI:58349"/>
    </ligand>
</feature>
<feature type="binding site" evidence="1">
    <location>
        <begin position="153"/>
        <end position="158"/>
    </location>
    <ligand>
        <name>NADP(+)</name>
        <dbReference type="ChEBI" id="CHEBI:58349"/>
    </ligand>
</feature>
<feature type="binding site" evidence="1">
    <location>
        <position position="224"/>
    </location>
    <ligand>
        <name>NADP(+)</name>
        <dbReference type="ChEBI" id="CHEBI:58349"/>
    </ligand>
</feature>
<feature type="binding site" evidence="1">
    <location>
        <position position="226"/>
    </location>
    <ligand>
        <name>shikimate</name>
        <dbReference type="ChEBI" id="CHEBI:36208"/>
    </ligand>
</feature>
<feature type="binding site" evidence="1">
    <location>
        <position position="247"/>
    </location>
    <ligand>
        <name>NADP(+)</name>
        <dbReference type="ChEBI" id="CHEBI:58349"/>
    </ligand>
</feature>
<protein>
    <recommendedName>
        <fullName evidence="1">Shikimate dehydrogenase (NADP(+))</fullName>
        <shortName evidence="1">SDH</shortName>
        <ecNumber evidence="1">1.1.1.25</ecNumber>
    </recommendedName>
</protein>
<gene>
    <name evidence="1" type="primary">aroE</name>
    <name type="ordered locus">MTH_242</name>
</gene>
<evidence type="ECO:0000255" key="1">
    <source>
        <dbReference type="HAMAP-Rule" id="MF_00222"/>
    </source>
</evidence>
<evidence type="ECO:0000305" key="2"/>
<organism>
    <name type="scientific">Methanothermobacter thermautotrophicus (strain ATCC 29096 / DSM 1053 / JCM 10044 / NBRC 100330 / Delta H)</name>
    <name type="common">Methanobacterium thermoautotrophicum</name>
    <dbReference type="NCBI Taxonomy" id="187420"/>
    <lineage>
        <taxon>Archaea</taxon>
        <taxon>Methanobacteriati</taxon>
        <taxon>Methanobacteriota</taxon>
        <taxon>Methanomada group</taxon>
        <taxon>Methanobacteria</taxon>
        <taxon>Methanobacteriales</taxon>
        <taxon>Methanobacteriaceae</taxon>
        <taxon>Methanothermobacter</taxon>
    </lineage>
</organism>
<name>AROE_METTH</name>
<dbReference type="EC" id="1.1.1.25" evidence="1"/>
<dbReference type="EMBL" id="AE000666">
    <property type="protein sequence ID" value="AAB84748.1"/>
    <property type="status" value="ALT_FRAME"/>
    <property type="molecule type" value="Genomic_DNA"/>
</dbReference>
<dbReference type="PIR" id="C69130">
    <property type="entry name" value="C69130"/>
</dbReference>
<dbReference type="SMR" id="O26344"/>
<dbReference type="FunCoup" id="O26344">
    <property type="interactions" value="75"/>
</dbReference>
<dbReference type="STRING" id="187420.MTH_242"/>
<dbReference type="PaxDb" id="187420-MTH_242"/>
<dbReference type="EnsemblBacteria" id="AAB84748">
    <property type="protein sequence ID" value="AAB84748"/>
    <property type="gene ID" value="MTH_242"/>
</dbReference>
<dbReference type="KEGG" id="mth:MTH_242"/>
<dbReference type="PATRIC" id="fig|187420.15.peg.211"/>
<dbReference type="HOGENOM" id="CLU_044063_4_1_2"/>
<dbReference type="InParanoid" id="O26344"/>
<dbReference type="UniPathway" id="UPA00053">
    <property type="reaction ID" value="UER00087"/>
</dbReference>
<dbReference type="Proteomes" id="UP000005223">
    <property type="component" value="Chromosome"/>
</dbReference>
<dbReference type="GO" id="GO:0050661">
    <property type="term" value="F:NADP binding"/>
    <property type="evidence" value="ECO:0007669"/>
    <property type="project" value="InterPro"/>
</dbReference>
<dbReference type="GO" id="GO:0004764">
    <property type="term" value="F:shikimate 3-dehydrogenase (NADP+) activity"/>
    <property type="evidence" value="ECO:0007669"/>
    <property type="project" value="UniProtKB-UniRule"/>
</dbReference>
<dbReference type="GO" id="GO:0008652">
    <property type="term" value="P:amino acid biosynthetic process"/>
    <property type="evidence" value="ECO:0007669"/>
    <property type="project" value="UniProtKB-KW"/>
</dbReference>
<dbReference type="GO" id="GO:0009073">
    <property type="term" value="P:aromatic amino acid family biosynthetic process"/>
    <property type="evidence" value="ECO:0007669"/>
    <property type="project" value="UniProtKB-KW"/>
</dbReference>
<dbReference type="GO" id="GO:0009423">
    <property type="term" value="P:chorismate biosynthetic process"/>
    <property type="evidence" value="ECO:0007669"/>
    <property type="project" value="UniProtKB-UniRule"/>
</dbReference>
<dbReference type="GO" id="GO:0019632">
    <property type="term" value="P:shikimate metabolic process"/>
    <property type="evidence" value="ECO:0007669"/>
    <property type="project" value="InterPro"/>
</dbReference>
<dbReference type="CDD" id="cd01065">
    <property type="entry name" value="NAD_bind_Shikimate_DH"/>
    <property type="match status" value="1"/>
</dbReference>
<dbReference type="Gene3D" id="3.40.50.10860">
    <property type="entry name" value="Leucine Dehydrogenase, chain A, domain 1"/>
    <property type="match status" value="1"/>
</dbReference>
<dbReference type="Gene3D" id="3.40.50.720">
    <property type="entry name" value="NAD(P)-binding Rossmann-like Domain"/>
    <property type="match status" value="1"/>
</dbReference>
<dbReference type="HAMAP" id="MF_00222">
    <property type="entry name" value="Shikimate_DH_AroE"/>
    <property type="match status" value="1"/>
</dbReference>
<dbReference type="InterPro" id="IPR046346">
    <property type="entry name" value="Aminoacid_DH-like_N_sf"/>
</dbReference>
<dbReference type="InterPro" id="IPR036291">
    <property type="entry name" value="NAD(P)-bd_dom_sf"/>
</dbReference>
<dbReference type="InterPro" id="IPR041121">
    <property type="entry name" value="SDH_C"/>
</dbReference>
<dbReference type="InterPro" id="IPR011342">
    <property type="entry name" value="Shikimate_DH"/>
</dbReference>
<dbReference type="InterPro" id="IPR013708">
    <property type="entry name" value="Shikimate_DH-bd_N"/>
</dbReference>
<dbReference type="InterPro" id="IPR022893">
    <property type="entry name" value="Shikimate_DH_fam"/>
</dbReference>
<dbReference type="InterPro" id="IPR006151">
    <property type="entry name" value="Shikm_DH/Glu-tRNA_Rdtase"/>
</dbReference>
<dbReference type="NCBIfam" id="TIGR00507">
    <property type="entry name" value="aroE"/>
    <property type="match status" value="1"/>
</dbReference>
<dbReference type="NCBIfam" id="NF001314">
    <property type="entry name" value="PRK00258.2-2"/>
    <property type="match status" value="1"/>
</dbReference>
<dbReference type="NCBIfam" id="NF001319">
    <property type="entry name" value="PRK00258.3-3"/>
    <property type="match status" value="1"/>
</dbReference>
<dbReference type="PANTHER" id="PTHR21089:SF1">
    <property type="entry name" value="BIFUNCTIONAL 3-DEHYDROQUINATE DEHYDRATASE_SHIKIMATE DEHYDROGENASE, CHLOROPLASTIC"/>
    <property type="match status" value="1"/>
</dbReference>
<dbReference type="PANTHER" id="PTHR21089">
    <property type="entry name" value="SHIKIMATE DEHYDROGENASE"/>
    <property type="match status" value="1"/>
</dbReference>
<dbReference type="Pfam" id="PF18317">
    <property type="entry name" value="SDH_C"/>
    <property type="match status" value="1"/>
</dbReference>
<dbReference type="Pfam" id="PF01488">
    <property type="entry name" value="Shikimate_DH"/>
    <property type="match status" value="1"/>
</dbReference>
<dbReference type="Pfam" id="PF08501">
    <property type="entry name" value="Shikimate_dh_N"/>
    <property type="match status" value="1"/>
</dbReference>
<dbReference type="SUPFAM" id="SSF53223">
    <property type="entry name" value="Aminoacid dehydrogenase-like, N-terminal domain"/>
    <property type="match status" value="1"/>
</dbReference>
<dbReference type="SUPFAM" id="SSF51735">
    <property type="entry name" value="NAD(P)-binding Rossmann-fold domains"/>
    <property type="match status" value="1"/>
</dbReference>
<keyword id="KW-0028">Amino-acid biosynthesis</keyword>
<keyword id="KW-0057">Aromatic amino acid biosynthesis</keyword>
<keyword id="KW-0521">NADP</keyword>
<keyword id="KW-0560">Oxidoreductase</keyword>
<keyword id="KW-1185">Reference proteome</keyword>
<proteinExistence type="inferred from homology"/>
<comment type="function">
    <text evidence="1">Involved in the biosynthesis of the chorismate, which leads to the biosynthesis of aromatic amino acids. Catalyzes the reversible NADPH linked reduction of 3-dehydroshikimate (DHSA) to yield shikimate (SA).</text>
</comment>
<comment type="catalytic activity">
    <reaction evidence="1">
        <text>shikimate + NADP(+) = 3-dehydroshikimate + NADPH + H(+)</text>
        <dbReference type="Rhea" id="RHEA:17737"/>
        <dbReference type="ChEBI" id="CHEBI:15378"/>
        <dbReference type="ChEBI" id="CHEBI:16630"/>
        <dbReference type="ChEBI" id="CHEBI:36208"/>
        <dbReference type="ChEBI" id="CHEBI:57783"/>
        <dbReference type="ChEBI" id="CHEBI:58349"/>
        <dbReference type="EC" id="1.1.1.25"/>
    </reaction>
</comment>
<comment type="pathway">
    <text evidence="1">Metabolic intermediate biosynthesis; chorismate biosynthesis; chorismate from D-erythrose 4-phosphate and phosphoenolpyruvate: step 4/7.</text>
</comment>
<comment type="subunit">
    <text evidence="1">Homodimer.</text>
</comment>
<comment type="similarity">
    <text evidence="1">Belongs to the shikimate dehydrogenase family.</text>
</comment>
<comment type="sequence caution" evidence="2">
    <conflict type="frameshift">
        <sequence resource="EMBL-CDS" id="AAB84748"/>
    </conflict>
</comment>
<sequence>MITGKTHVTGIMGHPLGHSLSPIMHNAAFRSLGMDWIYVPFPVKPENLKAAVEGLRALGVEGVNVTIPHKEAVLEYIDDIHGTAALIGAVNTLKFDDGTVRGYNTDASGCLRALEEVTSVEGSSVLILGAGGAARACAFQLAEKGASDITILNRTPEKARLLAEDMADKLGFEASYGGYELIQGSVKSADILIDTTPVGMHPHTDDRPLVGAELMHEGLVVHDLVYNPQRTVLLREAERASAIPVSGIRMLLYQGVEAFRIWTGRDPPLDVMEDALKRVLNRD</sequence>